<dbReference type="EMBL" id="CR859999">
    <property type="protein sequence ID" value="CAH92150.1"/>
    <property type="molecule type" value="mRNA"/>
</dbReference>
<dbReference type="RefSeq" id="NP_001127514.1">
    <property type="nucleotide sequence ID" value="NM_001134042.1"/>
</dbReference>
<dbReference type="SMR" id="Q5R7W0"/>
<dbReference type="STRING" id="9601.ENSPPYP00000009860"/>
<dbReference type="GeneID" id="100174590"/>
<dbReference type="KEGG" id="pon:100174590"/>
<dbReference type="CTD" id="56270"/>
<dbReference type="eggNOG" id="KOG2111">
    <property type="taxonomic scope" value="Eukaryota"/>
</dbReference>
<dbReference type="InParanoid" id="Q5R7W0"/>
<dbReference type="OrthoDB" id="1667587at2759"/>
<dbReference type="Proteomes" id="UP000001595">
    <property type="component" value="Unplaced"/>
</dbReference>
<dbReference type="GO" id="GO:0005764">
    <property type="term" value="C:lysosome"/>
    <property type="evidence" value="ECO:0000250"/>
    <property type="project" value="UniProtKB"/>
</dbReference>
<dbReference type="GO" id="GO:0000407">
    <property type="term" value="C:phagophore assembly site"/>
    <property type="evidence" value="ECO:0000250"/>
    <property type="project" value="UniProtKB"/>
</dbReference>
<dbReference type="GO" id="GO:0080025">
    <property type="term" value="F:phosphatidylinositol-3,5-bisphosphate binding"/>
    <property type="evidence" value="ECO:0000250"/>
    <property type="project" value="UniProtKB"/>
</dbReference>
<dbReference type="GO" id="GO:0032266">
    <property type="term" value="F:phosphatidylinositol-3-phosphate binding"/>
    <property type="evidence" value="ECO:0000250"/>
    <property type="project" value="UniProtKB"/>
</dbReference>
<dbReference type="GO" id="GO:0000045">
    <property type="term" value="P:autophagosome assembly"/>
    <property type="evidence" value="ECO:0000250"/>
    <property type="project" value="UniProtKB"/>
</dbReference>
<dbReference type="GO" id="GO:0009267">
    <property type="term" value="P:cellular response to starvation"/>
    <property type="evidence" value="ECO:0000250"/>
    <property type="project" value="UniProtKB"/>
</dbReference>
<dbReference type="FunFam" id="2.130.10.10:FF:000083">
    <property type="entry name" value="WD repeat domain phosphoinositide-interacting protein 3"/>
    <property type="match status" value="1"/>
</dbReference>
<dbReference type="Gene3D" id="2.130.10.10">
    <property type="entry name" value="YVTN repeat-like/Quinoprotein amine dehydrogenase"/>
    <property type="match status" value="1"/>
</dbReference>
<dbReference type="InterPro" id="IPR048720">
    <property type="entry name" value="PROPPIN"/>
</dbReference>
<dbReference type="InterPro" id="IPR015943">
    <property type="entry name" value="WD40/YVTN_repeat-like_dom_sf"/>
</dbReference>
<dbReference type="InterPro" id="IPR036322">
    <property type="entry name" value="WD40_repeat_dom_sf"/>
</dbReference>
<dbReference type="InterPro" id="IPR001680">
    <property type="entry name" value="WD40_rpt"/>
</dbReference>
<dbReference type="PANTHER" id="PTHR11227">
    <property type="entry name" value="WD-REPEAT PROTEIN INTERACTING WITH PHOSPHOINOSIDES WIPI -RELATED"/>
    <property type="match status" value="1"/>
</dbReference>
<dbReference type="Pfam" id="PF21032">
    <property type="entry name" value="PROPPIN"/>
    <property type="match status" value="1"/>
</dbReference>
<dbReference type="SMART" id="SM00320">
    <property type="entry name" value="WD40"/>
    <property type="match status" value="2"/>
</dbReference>
<dbReference type="SUPFAM" id="SSF50978">
    <property type="entry name" value="WD40 repeat-like"/>
    <property type="match status" value="1"/>
</dbReference>
<protein>
    <recommendedName>
        <fullName>WD repeat domain phosphoinositide-interacting protein 3</fullName>
        <shortName>WIPI-3</shortName>
    </recommendedName>
    <alternativeName>
        <fullName>WD repeat-containing protein 45B</fullName>
    </alternativeName>
</protein>
<organism>
    <name type="scientific">Pongo abelii</name>
    <name type="common">Sumatran orangutan</name>
    <name type="synonym">Pongo pygmaeus abelii</name>
    <dbReference type="NCBI Taxonomy" id="9601"/>
    <lineage>
        <taxon>Eukaryota</taxon>
        <taxon>Metazoa</taxon>
        <taxon>Chordata</taxon>
        <taxon>Craniata</taxon>
        <taxon>Vertebrata</taxon>
        <taxon>Euteleostomi</taxon>
        <taxon>Mammalia</taxon>
        <taxon>Eutheria</taxon>
        <taxon>Euarchontoglires</taxon>
        <taxon>Primates</taxon>
        <taxon>Haplorrhini</taxon>
        <taxon>Catarrhini</taxon>
        <taxon>Hominidae</taxon>
        <taxon>Pongo</taxon>
    </lineage>
</organism>
<comment type="function">
    <text evidence="1">Component of the autophagy machinery that controls the major intracellular degradation process by which cytoplasmic materials are packaged into autophagosomes and delivered to lysosomes for degradation. Binds phosphatidylinositol 3-phosphate (PtdIns3P), and other phosphoinositides including PtdIns(3,5)P2, forming on membranes of the endoplasmic reticulum upon activation of the upstream ULK1 and PI3 kinases and is recruited at phagophore assembly sites where it regulates the elongation of nascent phagophores downstream of WIPI2. In the cellular response to starvation, may also function together with the TSC1-TSC2 complex and RB1CC1 in the inhibition of the mTORC1 signaling pathway.</text>
</comment>
<comment type="subunit">
    <text evidence="1">Interacts with the TSC1-TSC2 complex; stimulated upon starvation. Interacts with RB1CC1.</text>
</comment>
<comment type="subcellular location">
    <subcellularLocation>
        <location evidence="1">Preautophagosomal structure</location>
    </subcellularLocation>
    <subcellularLocation>
        <location evidence="1">Lysosome</location>
    </subcellularLocation>
</comment>
<comment type="domain">
    <text evidence="2">The L/FRRG motif is required for recruitment to PtdIns3P.</text>
</comment>
<comment type="similarity">
    <text evidence="3">Belongs to the WD repeat PROPPIN family.</text>
</comment>
<keyword id="KW-0072">Autophagy</keyword>
<keyword id="KW-0446">Lipid-binding</keyword>
<keyword id="KW-0458">Lysosome</keyword>
<keyword id="KW-1185">Reference proteome</keyword>
<keyword id="KW-0677">Repeat</keyword>
<keyword id="KW-0853">WD repeat</keyword>
<gene>
    <name type="primary">WDR45B</name>
    <name type="synonym">WIPI3</name>
</gene>
<feature type="chain" id="PRO_0000051447" description="WD repeat domain phosphoinositide-interacting protein 3">
    <location>
        <begin position="1"/>
        <end position="344"/>
    </location>
</feature>
<feature type="repeat" description="WD 1">
    <location>
        <begin position="183"/>
        <end position="223"/>
    </location>
</feature>
<feature type="repeat" description="WD 2">
    <location>
        <begin position="228"/>
        <end position="267"/>
    </location>
</feature>
<feature type="short sequence motif" description="L/FRRG motif" evidence="2">
    <location>
        <begin position="224"/>
        <end position="227"/>
    </location>
</feature>
<sequence length="344" mass="38062">MNLLPCNPHGNGLLYAGFNQDHGCFACGMENGFRVYNTDPLKEKEKQEFLEGGVGHVEMLFRCNYLALVGGGKKPKYPPNKVMIWDDLKKKTVIEIEFSTEVKAVKLRRDRIVVVLDSMIKVFTFTHNPHQLHVFETCYNPKGLCVLCPNSNNSLLAFPGTHTGHVQLVDLASTEKPPVDIPAHEGVLSCIALNLQGTRIATASEKGTLIRIFDTSSGHLIQELRRGSQAANIYCINSNQDASLICVSSDHGTVHIFAAEDPKRNKQSSLASASFLPKYFSSKWSFSKFQVPSGSPCICAFGTEPNAVIAICADGSYYKFLFNPKGECIRDVYAQFLEMTDDKL</sequence>
<reference key="1">
    <citation type="submission" date="2004-11" db="EMBL/GenBank/DDBJ databases">
        <authorList>
            <consortium name="The German cDNA consortium"/>
        </authorList>
    </citation>
    <scope>NUCLEOTIDE SEQUENCE [LARGE SCALE MRNA]</scope>
    <source>
        <tissue>Brain cortex</tissue>
    </source>
</reference>
<accession>Q5R7W0</accession>
<name>WIPI3_PONAB</name>
<evidence type="ECO:0000250" key="1">
    <source>
        <dbReference type="UniProtKB" id="Q5MNZ6"/>
    </source>
</evidence>
<evidence type="ECO:0000250" key="2">
    <source>
        <dbReference type="UniProtKB" id="Q9Y4P8"/>
    </source>
</evidence>
<evidence type="ECO:0000305" key="3"/>
<proteinExistence type="evidence at transcript level"/>